<name>CSE1_SCHPO</name>
<evidence type="ECO:0000250" key="1"/>
<evidence type="ECO:0000255" key="2">
    <source>
        <dbReference type="PROSITE-ProRule" id="PRU00115"/>
    </source>
</evidence>
<evidence type="ECO:0000269" key="3">
    <source>
    </source>
</evidence>
<evidence type="ECO:0000269" key="4">
    <source>
    </source>
</evidence>
<evidence type="ECO:0000305" key="5"/>
<gene>
    <name type="primary">kap109</name>
    <name type="ORF">pi080</name>
    <name type="ORF">SPBC30B4.05</name>
</gene>
<accession>O13671</accession>
<accession>Q9USC9</accession>
<dbReference type="EMBL" id="CU329671">
    <property type="protein sequence ID" value="CAA20318.1"/>
    <property type="molecule type" value="Genomic_DNA"/>
</dbReference>
<dbReference type="EMBL" id="AB027856">
    <property type="protein sequence ID" value="BAA87160.1"/>
    <property type="molecule type" value="Genomic_DNA"/>
</dbReference>
<dbReference type="EMBL" id="AB004539">
    <property type="protein sequence ID" value="BAA21462.1"/>
    <property type="molecule type" value="Genomic_DNA"/>
</dbReference>
<dbReference type="PIR" id="T40171">
    <property type="entry name" value="T40171"/>
</dbReference>
<dbReference type="RefSeq" id="NP_595530.1">
    <property type="nucleotide sequence ID" value="NM_001021440.2"/>
</dbReference>
<dbReference type="SMR" id="O13671"/>
<dbReference type="BioGRID" id="276947">
    <property type="interactions" value="3"/>
</dbReference>
<dbReference type="FunCoup" id="O13671">
    <property type="interactions" value="941"/>
</dbReference>
<dbReference type="STRING" id="284812.O13671"/>
<dbReference type="iPTMnet" id="O13671"/>
<dbReference type="PaxDb" id="4896-SPBC30B4.05.1"/>
<dbReference type="EnsemblFungi" id="SPBC30B4.05.1">
    <property type="protein sequence ID" value="SPBC30B4.05.1:pep"/>
    <property type="gene ID" value="SPBC30B4.05"/>
</dbReference>
<dbReference type="GeneID" id="2540419"/>
<dbReference type="KEGG" id="spo:2540419"/>
<dbReference type="PomBase" id="SPBC30B4.05">
    <property type="gene designation" value="kap109"/>
</dbReference>
<dbReference type="VEuPathDB" id="FungiDB:SPBC30B4.05"/>
<dbReference type="eggNOG" id="KOG1992">
    <property type="taxonomic scope" value="Eukaryota"/>
</dbReference>
<dbReference type="HOGENOM" id="CLU_009614_0_0_1"/>
<dbReference type="InParanoid" id="O13671"/>
<dbReference type="OMA" id="AENEFLM"/>
<dbReference type="PhylomeDB" id="O13671"/>
<dbReference type="PRO" id="PR:O13671"/>
<dbReference type="Proteomes" id="UP000002485">
    <property type="component" value="Chromosome II"/>
</dbReference>
<dbReference type="GO" id="GO:0005829">
    <property type="term" value="C:cytosol"/>
    <property type="evidence" value="ECO:0000318"/>
    <property type="project" value="GO_Central"/>
</dbReference>
<dbReference type="GO" id="GO:0005635">
    <property type="term" value="C:nuclear envelope"/>
    <property type="evidence" value="ECO:0007005"/>
    <property type="project" value="PomBase"/>
</dbReference>
<dbReference type="GO" id="GO:0034399">
    <property type="term" value="C:nuclear periphery"/>
    <property type="evidence" value="ECO:0000314"/>
    <property type="project" value="PomBase"/>
</dbReference>
<dbReference type="GO" id="GO:0005525">
    <property type="term" value="F:GTP binding"/>
    <property type="evidence" value="ECO:0000303"/>
    <property type="project" value="PomBase"/>
</dbReference>
<dbReference type="GO" id="GO:0005049">
    <property type="term" value="F:nuclear export signal receptor activity"/>
    <property type="evidence" value="ECO:0000318"/>
    <property type="project" value="GO_Central"/>
</dbReference>
<dbReference type="GO" id="GO:0031267">
    <property type="term" value="F:small GTPase binding"/>
    <property type="evidence" value="ECO:0007669"/>
    <property type="project" value="InterPro"/>
</dbReference>
<dbReference type="GO" id="GO:0006611">
    <property type="term" value="P:protein export from nucleus"/>
    <property type="evidence" value="ECO:0000318"/>
    <property type="project" value="GO_Central"/>
</dbReference>
<dbReference type="GO" id="GO:0006606">
    <property type="term" value="P:protein import into nucleus"/>
    <property type="evidence" value="ECO:0000318"/>
    <property type="project" value="GO_Central"/>
</dbReference>
<dbReference type="FunFam" id="1.25.10.10:FF:000057">
    <property type="entry name" value="Exportin-2 isoform 1"/>
    <property type="match status" value="1"/>
</dbReference>
<dbReference type="Gene3D" id="1.25.10.10">
    <property type="entry name" value="Leucine-rich Repeat Variant"/>
    <property type="match status" value="1"/>
</dbReference>
<dbReference type="InterPro" id="IPR011989">
    <property type="entry name" value="ARM-like"/>
</dbReference>
<dbReference type="InterPro" id="IPR016024">
    <property type="entry name" value="ARM-type_fold"/>
</dbReference>
<dbReference type="InterPro" id="IPR001494">
    <property type="entry name" value="Importin-beta_N"/>
</dbReference>
<dbReference type="InterPro" id="IPR005043">
    <property type="entry name" value="XPO2_C"/>
</dbReference>
<dbReference type="InterPro" id="IPR013713">
    <property type="entry name" value="XPO2_central"/>
</dbReference>
<dbReference type="PANTHER" id="PTHR10997:SF8">
    <property type="entry name" value="EXPORTIN-2"/>
    <property type="match status" value="1"/>
</dbReference>
<dbReference type="PANTHER" id="PTHR10997">
    <property type="entry name" value="IMPORTIN-7, 8, 11"/>
    <property type="match status" value="1"/>
</dbReference>
<dbReference type="Pfam" id="PF03378">
    <property type="entry name" value="CAS_CSE1"/>
    <property type="match status" value="1"/>
</dbReference>
<dbReference type="Pfam" id="PF08506">
    <property type="entry name" value="Cse1"/>
    <property type="match status" value="1"/>
</dbReference>
<dbReference type="Pfam" id="PF03810">
    <property type="entry name" value="IBN_N"/>
    <property type="match status" value="1"/>
</dbReference>
<dbReference type="SMART" id="SM00913">
    <property type="entry name" value="IBN_N"/>
    <property type="match status" value="1"/>
</dbReference>
<dbReference type="SUPFAM" id="SSF48371">
    <property type="entry name" value="ARM repeat"/>
    <property type="match status" value="1"/>
</dbReference>
<dbReference type="PROSITE" id="PS50166">
    <property type="entry name" value="IMPORTIN_B_NT"/>
    <property type="match status" value="1"/>
</dbReference>
<organism>
    <name type="scientific">Schizosaccharomyces pombe (strain 972 / ATCC 24843)</name>
    <name type="common">Fission yeast</name>
    <dbReference type="NCBI Taxonomy" id="284812"/>
    <lineage>
        <taxon>Eukaryota</taxon>
        <taxon>Fungi</taxon>
        <taxon>Dikarya</taxon>
        <taxon>Ascomycota</taxon>
        <taxon>Taphrinomycotina</taxon>
        <taxon>Schizosaccharomycetes</taxon>
        <taxon>Schizosaccharomycetales</taxon>
        <taxon>Schizosaccharomycetaceae</taxon>
        <taxon>Schizosaccharomyces</taxon>
    </lineage>
</organism>
<sequence length="967" mass="109421">MDDIPTLLARTLNPTTSKSAEEALKVWELQDSSFALKLLNIVAEDTVDINIKLAASLYFKNYIKKHWDSEEGASIRISDEVAELIKREIINLMLKSTTIIQVQLGEVIGYIANFDFPDRWDTLLPDLISKLSAVDMNTNIAVLSTAHAIFKRWRPLFRSDALFLEIKYVLDRFCEPFLALFVQTNNLLRNGPQDAESLNSLFQVILLECKLFYDLNCQDIPEFFEDHMSEFMTAFLNYFTYTNPSLEGDEGETNVLIKVKASICEIVELYTLRYEEVFTMLYDFVNVTWTLLTTLTPDEKYDGLVGKAMAFLTSVIRIRKHAEFFQQDQVLQQFIELVVLPNICLRESDEELFEDDPLEYVRRDLEGSNSDSRARSAIVLVRGLLDHFDQKITSVVSTHINANLQQFSTNPSLEWNKKYVALQLFSAIAIKGQSTRLGVTSINLMVDVVAFFENNIKPDLLQPAGVIHPMVLAEDIKYVFTFRNQLNSQQLIDIFPTILRFLEMPSFVVYTYAAIALDQLLTVRHNHVHIFTSLLIAPHILPALNQLFLIVESASTPQKLAENDYLMKAVMRIIIMSQEAILPAASLLLQHLTKITEEVSKNPSNPKFNHYLFESIGALIRSLSKSGPQTVSQLENALLPVFQNVLIEDVTEFIPYVLQLLSQLVEASGNEPLPDFVVNLIQPCLSPALWDSKGNIPALVRLLRAMIFRGPQIFISNKFVEPVLGIFQKLISSKVNDHFGFDLLDRVFTVFNANILAPYINHIFFLLLSRLKNSRTERFVLRCTIFFFFVASEQTGTCGPDNLIQGVDAVQSGVFGQLMTSIILPQAQKLALPLDRKISALGLLRLLTCDLVLAPDAIYENLIIPLLTCILKLFEMPIEQAQTDADEELFMDEIDADSMSFQASFSRLATTGGKRVDPFPQITDLKQYCATEMNLANRNMGGRLSQIISTHLPGDGQSVLQSYGYVI</sequence>
<proteinExistence type="inferred from homology"/>
<reference key="1">
    <citation type="journal article" date="2002" name="Nature">
        <title>The genome sequence of Schizosaccharomyces pombe.</title>
        <authorList>
            <person name="Wood V."/>
            <person name="Gwilliam R."/>
            <person name="Rajandream M.A."/>
            <person name="Lyne M.H."/>
            <person name="Lyne R."/>
            <person name="Stewart A."/>
            <person name="Sgouros J.G."/>
            <person name="Peat N."/>
            <person name="Hayles J."/>
            <person name="Baker S.G."/>
            <person name="Basham D."/>
            <person name="Bowman S."/>
            <person name="Brooks K."/>
            <person name="Brown D."/>
            <person name="Brown S."/>
            <person name="Chillingworth T."/>
            <person name="Churcher C.M."/>
            <person name="Collins M."/>
            <person name="Connor R."/>
            <person name="Cronin A."/>
            <person name="Davis P."/>
            <person name="Feltwell T."/>
            <person name="Fraser A."/>
            <person name="Gentles S."/>
            <person name="Goble A."/>
            <person name="Hamlin N."/>
            <person name="Harris D.E."/>
            <person name="Hidalgo J."/>
            <person name="Hodgson G."/>
            <person name="Holroyd S."/>
            <person name="Hornsby T."/>
            <person name="Howarth S."/>
            <person name="Huckle E.J."/>
            <person name="Hunt S."/>
            <person name="Jagels K."/>
            <person name="James K.D."/>
            <person name="Jones L."/>
            <person name="Jones M."/>
            <person name="Leather S."/>
            <person name="McDonald S."/>
            <person name="McLean J."/>
            <person name="Mooney P."/>
            <person name="Moule S."/>
            <person name="Mungall K.L."/>
            <person name="Murphy L.D."/>
            <person name="Niblett D."/>
            <person name="Odell C."/>
            <person name="Oliver K."/>
            <person name="O'Neil S."/>
            <person name="Pearson D."/>
            <person name="Quail M.A."/>
            <person name="Rabbinowitsch E."/>
            <person name="Rutherford K.M."/>
            <person name="Rutter S."/>
            <person name="Saunders D."/>
            <person name="Seeger K."/>
            <person name="Sharp S."/>
            <person name="Skelton J."/>
            <person name="Simmonds M.N."/>
            <person name="Squares R."/>
            <person name="Squares S."/>
            <person name="Stevens K."/>
            <person name="Taylor K."/>
            <person name="Taylor R.G."/>
            <person name="Tivey A."/>
            <person name="Walsh S.V."/>
            <person name="Warren T."/>
            <person name="Whitehead S."/>
            <person name="Woodward J.R."/>
            <person name="Volckaert G."/>
            <person name="Aert R."/>
            <person name="Robben J."/>
            <person name="Grymonprez B."/>
            <person name="Weltjens I."/>
            <person name="Vanstreels E."/>
            <person name="Rieger M."/>
            <person name="Schaefer M."/>
            <person name="Mueller-Auer S."/>
            <person name="Gabel C."/>
            <person name="Fuchs M."/>
            <person name="Duesterhoeft A."/>
            <person name="Fritzc C."/>
            <person name="Holzer E."/>
            <person name="Moestl D."/>
            <person name="Hilbert H."/>
            <person name="Borzym K."/>
            <person name="Langer I."/>
            <person name="Beck A."/>
            <person name="Lehrach H."/>
            <person name="Reinhardt R."/>
            <person name="Pohl T.M."/>
            <person name="Eger P."/>
            <person name="Zimmermann W."/>
            <person name="Wedler H."/>
            <person name="Wambutt R."/>
            <person name="Purnelle B."/>
            <person name="Goffeau A."/>
            <person name="Cadieu E."/>
            <person name="Dreano S."/>
            <person name="Gloux S."/>
            <person name="Lelaure V."/>
            <person name="Mottier S."/>
            <person name="Galibert F."/>
            <person name="Aves S.J."/>
            <person name="Xiang Z."/>
            <person name="Hunt C."/>
            <person name="Moore K."/>
            <person name="Hurst S.M."/>
            <person name="Lucas M."/>
            <person name="Rochet M."/>
            <person name="Gaillardin C."/>
            <person name="Tallada V.A."/>
            <person name="Garzon A."/>
            <person name="Thode G."/>
            <person name="Daga R.R."/>
            <person name="Cruzado L."/>
            <person name="Jimenez J."/>
            <person name="Sanchez M."/>
            <person name="del Rey F."/>
            <person name="Benito J."/>
            <person name="Dominguez A."/>
            <person name="Revuelta J.L."/>
            <person name="Moreno S."/>
            <person name="Armstrong J."/>
            <person name="Forsburg S.L."/>
            <person name="Cerutti L."/>
            <person name="Lowe T."/>
            <person name="McCombie W.R."/>
            <person name="Paulsen I."/>
            <person name="Potashkin J."/>
            <person name="Shpakovski G.V."/>
            <person name="Ussery D."/>
            <person name="Barrell B.G."/>
            <person name="Nurse P."/>
        </authorList>
    </citation>
    <scope>NUCLEOTIDE SEQUENCE [LARGE SCALE GENOMIC DNA]</scope>
    <source>
        <strain>972 / ATCC 24843</strain>
    </source>
</reference>
<reference key="2">
    <citation type="journal article" date="2000" name="Genes Cells">
        <title>Large-scale screening of intracellular protein localization in living fission yeast cells by the use of a GFP-fusion genomic DNA library.</title>
        <authorList>
            <person name="Ding D.-Q."/>
            <person name="Tomita Y."/>
            <person name="Yamamoto A."/>
            <person name="Chikashige Y."/>
            <person name="Haraguchi T."/>
            <person name="Hiraoka Y."/>
        </authorList>
    </citation>
    <scope>NUCLEOTIDE SEQUENCE [LARGE SCALE GENOMIC DNA] OF 22-166</scope>
    <scope>SUBCELLULAR LOCATION</scope>
    <source>
        <strain>ATCC 38364 / 968</strain>
    </source>
</reference>
<reference key="3">
    <citation type="journal article" date="2000" name="Yeast">
        <title>A 38 kb segment containing the cdc2 gene from the left arm of fission yeast chromosome II: sequence analysis and characterization of the genomic DNA and cDNAs encoded on the segment.</title>
        <authorList>
            <person name="Machida M."/>
            <person name="Yamazaki S."/>
            <person name="Kunihiro S."/>
            <person name="Tanaka T."/>
            <person name="Kushida N."/>
            <person name="Jinno K."/>
            <person name="Haikawa Y."/>
            <person name="Yamazaki J."/>
            <person name="Yamamoto S."/>
            <person name="Sekine M."/>
            <person name="Oguchi A."/>
            <person name="Nagai Y."/>
            <person name="Sakai M."/>
            <person name="Aoki K."/>
            <person name="Ogura K."/>
            <person name="Kudoh Y."/>
            <person name="Kikuchi H."/>
            <person name="Zhang M.Q."/>
            <person name="Yanagida M."/>
        </authorList>
    </citation>
    <scope>NUCLEOTIDE SEQUENCE [LARGE SCALE GENOMIC DNA] OF 518-967</scope>
    <source>
        <strain>972 / ATCC 24843</strain>
    </source>
</reference>
<reference key="4">
    <citation type="journal article" date="2006" name="Nat. Biotechnol.">
        <title>ORFeome cloning and global analysis of protein localization in the fission yeast Schizosaccharomyces pombe.</title>
        <authorList>
            <person name="Matsuyama A."/>
            <person name="Arai R."/>
            <person name="Yashiroda Y."/>
            <person name="Shirai A."/>
            <person name="Kamata A."/>
            <person name="Sekido S."/>
            <person name="Kobayashi Y."/>
            <person name="Hashimoto A."/>
            <person name="Hamamoto M."/>
            <person name="Hiraoka Y."/>
            <person name="Horinouchi S."/>
            <person name="Yoshida M."/>
        </authorList>
    </citation>
    <scope>SUBCELLULAR LOCATION [LARGE SCALE ANALYSIS]</scope>
</reference>
<protein>
    <recommendedName>
        <fullName>Importin-alpha re-exporter</fullName>
    </recommendedName>
    <alternativeName>
        <fullName>Cellular apoptosis susceptibility protein homolog</fullName>
    </alternativeName>
</protein>
<keyword id="KW-0963">Cytoplasm</keyword>
<keyword id="KW-0539">Nucleus</keyword>
<keyword id="KW-0653">Protein transport</keyword>
<keyword id="KW-1185">Reference proteome</keyword>
<keyword id="KW-0813">Transport</keyword>
<feature type="chain" id="PRO_0000117292" description="Importin-alpha re-exporter">
    <location>
        <begin position="1"/>
        <end position="967"/>
    </location>
</feature>
<feature type="domain" description="Importin N-terminal" evidence="2">
    <location>
        <begin position="20"/>
        <end position="95"/>
    </location>
</feature>
<comment type="function">
    <text evidence="1">Export receptor for importin alpha. Mediates importin-alpha re-export from the nucleus to the cytoplasm after import substrates have been released into the nucleoplasm (By similarity).</text>
</comment>
<comment type="subunit">
    <text evidence="1">Binds with high affinity to importin-alpha only in the presence of RanGTP.</text>
</comment>
<comment type="subcellular location">
    <subcellularLocation>
        <location evidence="1">Cytoplasm</location>
    </subcellularLocation>
    <subcellularLocation>
        <location evidence="3 4">Nucleus envelope</location>
    </subcellularLocation>
</comment>
<comment type="similarity">
    <text evidence="5">Belongs to the XPO2/CSE1 family.</text>
</comment>